<dbReference type="EC" id="6.1.1.12" evidence="1"/>
<dbReference type="EMBL" id="AM933173">
    <property type="protein sequence ID" value="CAR37032.1"/>
    <property type="molecule type" value="Genomic_DNA"/>
</dbReference>
<dbReference type="RefSeq" id="WP_001258629.1">
    <property type="nucleotide sequence ID" value="NC_011274.1"/>
</dbReference>
<dbReference type="SMR" id="B5R8D6"/>
<dbReference type="KEGG" id="seg:SG1151"/>
<dbReference type="HOGENOM" id="CLU_014330_3_2_6"/>
<dbReference type="Proteomes" id="UP000008321">
    <property type="component" value="Chromosome"/>
</dbReference>
<dbReference type="GO" id="GO:0005737">
    <property type="term" value="C:cytoplasm"/>
    <property type="evidence" value="ECO:0007669"/>
    <property type="project" value="UniProtKB-SubCell"/>
</dbReference>
<dbReference type="GO" id="GO:0004815">
    <property type="term" value="F:aspartate-tRNA ligase activity"/>
    <property type="evidence" value="ECO:0007669"/>
    <property type="project" value="UniProtKB-UniRule"/>
</dbReference>
<dbReference type="GO" id="GO:0005524">
    <property type="term" value="F:ATP binding"/>
    <property type="evidence" value="ECO:0007669"/>
    <property type="project" value="UniProtKB-UniRule"/>
</dbReference>
<dbReference type="GO" id="GO:0003676">
    <property type="term" value="F:nucleic acid binding"/>
    <property type="evidence" value="ECO:0007669"/>
    <property type="project" value="InterPro"/>
</dbReference>
<dbReference type="GO" id="GO:0006422">
    <property type="term" value="P:aspartyl-tRNA aminoacylation"/>
    <property type="evidence" value="ECO:0007669"/>
    <property type="project" value="UniProtKB-UniRule"/>
</dbReference>
<dbReference type="CDD" id="cd00777">
    <property type="entry name" value="AspRS_core"/>
    <property type="match status" value="1"/>
</dbReference>
<dbReference type="CDD" id="cd04317">
    <property type="entry name" value="EcAspRS_like_N"/>
    <property type="match status" value="1"/>
</dbReference>
<dbReference type="FunFam" id="2.40.50.140:FF:000080">
    <property type="entry name" value="Aspartate--tRNA ligase"/>
    <property type="match status" value="1"/>
</dbReference>
<dbReference type="FunFam" id="3.30.1360.30:FF:000001">
    <property type="entry name" value="Aspartate--tRNA ligase"/>
    <property type="match status" value="1"/>
</dbReference>
<dbReference type="Gene3D" id="3.30.930.10">
    <property type="entry name" value="Bira Bifunctional Protein, Domain 2"/>
    <property type="match status" value="1"/>
</dbReference>
<dbReference type="Gene3D" id="3.30.1360.30">
    <property type="entry name" value="GAD-like domain"/>
    <property type="match status" value="1"/>
</dbReference>
<dbReference type="Gene3D" id="2.40.50.140">
    <property type="entry name" value="Nucleic acid-binding proteins"/>
    <property type="match status" value="1"/>
</dbReference>
<dbReference type="HAMAP" id="MF_00044">
    <property type="entry name" value="Asp_tRNA_synth_type1"/>
    <property type="match status" value="1"/>
</dbReference>
<dbReference type="InterPro" id="IPR004364">
    <property type="entry name" value="Aa-tRNA-synt_II"/>
</dbReference>
<dbReference type="InterPro" id="IPR006195">
    <property type="entry name" value="aa-tRNA-synth_II"/>
</dbReference>
<dbReference type="InterPro" id="IPR045864">
    <property type="entry name" value="aa-tRNA-synth_II/BPL/LPL"/>
</dbReference>
<dbReference type="InterPro" id="IPR004524">
    <property type="entry name" value="Asp-tRNA-ligase_1"/>
</dbReference>
<dbReference type="InterPro" id="IPR047089">
    <property type="entry name" value="Asp-tRNA-ligase_1_N"/>
</dbReference>
<dbReference type="InterPro" id="IPR002312">
    <property type="entry name" value="Asp/Asn-tRNA-synth_IIb"/>
</dbReference>
<dbReference type="InterPro" id="IPR047090">
    <property type="entry name" value="AspRS_core"/>
</dbReference>
<dbReference type="InterPro" id="IPR004115">
    <property type="entry name" value="GAD-like_sf"/>
</dbReference>
<dbReference type="InterPro" id="IPR029351">
    <property type="entry name" value="GAD_dom"/>
</dbReference>
<dbReference type="InterPro" id="IPR012340">
    <property type="entry name" value="NA-bd_OB-fold"/>
</dbReference>
<dbReference type="InterPro" id="IPR004365">
    <property type="entry name" value="NA-bd_OB_tRNA"/>
</dbReference>
<dbReference type="NCBIfam" id="TIGR00459">
    <property type="entry name" value="aspS_bact"/>
    <property type="match status" value="1"/>
</dbReference>
<dbReference type="NCBIfam" id="NF001750">
    <property type="entry name" value="PRK00476.1"/>
    <property type="match status" value="1"/>
</dbReference>
<dbReference type="PANTHER" id="PTHR22594:SF5">
    <property type="entry name" value="ASPARTATE--TRNA LIGASE, MITOCHONDRIAL"/>
    <property type="match status" value="1"/>
</dbReference>
<dbReference type="PANTHER" id="PTHR22594">
    <property type="entry name" value="ASPARTYL/LYSYL-TRNA SYNTHETASE"/>
    <property type="match status" value="1"/>
</dbReference>
<dbReference type="Pfam" id="PF02938">
    <property type="entry name" value="GAD"/>
    <property type="match status" value="1"/>
</dbReference>
<dbReference type="Pfam" id="PF00152">
    <property type="entry name" value="tRNA-synt_2"/>
    <property type="match status" value="1"/>
</dbReference>
<dbReference type="Pfam" id="PF01336">
    <property type="entry name" value="tRNA_anti-codon"/>
    <property type="match status" value="1"/>
</dbReference>
<dbReference type="PRINTS" id="PR01042">
    <property type="entry name" value="TRNASYNTHASP"/>
</dbReference>
<dbReference type="SUPFAM" id="SSF55681">
    <property type="entry name" value="Class II aaRS and biotin synthetases"/>
    <property type="match status" value="1"/>
</dbReference>
<dbReference type="SUPFAM" id="SSF55261">
    <property type="entry name" value="GAD domain-like"/>
    <property type="match status" value="1"/>
</dbReference>
<dbReference type="SUPFAM" id="SSF50249">
    <property type="entry name" value="Nucleic acid-binding proteins"/>
    <property type="match status" value="1"/>
</dbReference>
<dbReference type="PROSITE" id="PS50862">
    <property type="entry name" value="AA_TRNA_LIGASE_II"/>
    <property type="match status" value="1"/>
</dbReference>
<gene>
    <name evidence="1" type="primary">aspS</name>
    <name type="ordered locus">SG1151</name>
</gene>
<comment type="function">
    <text evidence="1">Catalyzes the attachment of L-aspartate to tRNA(Asp) in a two-step reaction: L-aspartate is first activated by ATP to form Asp-AMP and then transferred to the acceptor end of tRNA(Asp).</text>
</comment>
<comment type="catalytic activity">
    <reaction evidence="1">
        <text>tRNA(Asp) + L-aspartate + ATP = L-aspartyl-tRNA(Asp) + AMP + diphosphate</text>
        <dbReference type="Rhea" id="RHEA:19649"/>
        <dbReference type="Rhea" id="RHEA-COMP:9660"/>
        <dbReference type="Rhea" id="RHEA-COMP:9678"/>
        <dbReference type="ChEBI" id="CHEBI:29991"/>
        <dbReference type="ChEBI" id="CHEBI:30616"/>
        <dbReference type="ChEBI" id="CHEBI:33019"/>
        <dbReference type="ChEBI" id="CHEBI:78442"/>
        <dbReference type="ChEBI" id="CHEBI:78516"/>
        <dbReference type="ChEBI" id="CHEBI:456215"/>
        <dbReference type="EC" id="6.1.1.12"/>
    </reaction>
</comment>
<comment type="subunit">
    <text evidence="1">Homodimer.</text>
</comment>
<comment type="subcellular location">
    <subcellularLocation>
        <location evidence="1">Cytoplasm</location>
    </subcellularLocation>
</comment>
<comment type="similarity">
    <text evidence="1">Belongs to the class-II aminoacyl-tRNA synthetase family. Type 1 subfamily.</text>
</comment>
<feature type="chain" id="PRO_1000091038" description="Aspartate--tRNA ligase">
    <location>
        <begin position="1"/>
        <end position="590"/>
    </location>
</feature>
<feature type="region of interest" description="Aspartate" evidence="1">
    <location>
        <begin position="195"/>
        <end position="198"/>
    </location>
</feature>
<feature type="binding site" evidence="1">
    <location>
        <position position="171"/>
    </location>
    <ligand>
        <name>L-aspartate</name>
        <dbReference type="ChEBI" id="CHEBI:29991"/>
    </ligand>
</feature>
<feature type="binding site" evidence="1">
    <location>
        <begin position="217"/>
        <end position="219"/>
    </location>
    <ligand>
        <name>ATP</name>
        <dbReference type="ChEBI" id="CHEBI:30616"/>
    </ligand>
</feature>
<feature type="binding site" evidence="1">
    <location>
        <position position="217"/>
    </location>
    <ligand>
        <name>L-aspartate</name>
        <dbReference type="ChEBI" id="CHEBI:29991"/>
    </ligand>
</feature>
<feature type="binding site" evidence="1">
    <location>
        <position position="226"/>
    </location>
    <ligand>
        <name>ATP</name>
        <dbReference type="ChEBI" id="CHEBI:30616"/>
    </ligand>
</feature>
<feature type="binding site" evidence="1">
    <location>
        <position position="448"/>
    </location>
    <ligand>
        <name>L-aspartate</name>
        <dbReference type="ChEBI" id="CHEBI:29991"/>
    </ligand>
</feature>
<feature type="binding site" evidence="1">
    <location>
        <position position="482"/>
    </location>
    <ligand>
        <name>ATP</name>
        <dbReference type="ChEBI" id="CHEBI:30616"/>
    </ligand>
</feature>
<feature type="binding site" evidence="1">
    <location>
        <position position="489"/>
    </location>
    <ligand>
        <name>L-aspartate</name>
        <dbReference type="ChEBI" id="CHEBI:29991"/>
    </ligand>
</feature>
<feature type="binding site" evidence="1">
    <location>
        <begin position="534"/>
        <end position="537"/>
    </location>
    <ligand>
        <name>ATP</name>
        <dbReference type="ChEBI" id="CHEBI:30616"/>
    </ligand>
</feature>
<evidence type="ECO:0000255" key="1">
    <source>
        <dbReference type="HAMAP-Rule" id="MF_00044"/>
    </source>
</evidence>
<sequence length="590" mass="65753">MRTEYCGQLRLSHVGQQVTLCGWVNRRRDLGSLIFIDMRDREGIVQVFFDPDRADALKLASELRNEFCIQVTGTVRARDAKNVNADMATGEIEVLASSLTIINRADSLPLDANHVNTEEARLKYRYLDLRRPEMAQRLKTRAKITSLVRRFMDDHGFLDIETPMLTKATPEGARDYLVPSRVHKGKFYALPQSPQLFKQLLMMSGFDRYYQIVKCFRDEDLRADRQPEFTQIDVETSFMTAPQVREVMEALVRHLWLEVKGVDLGDFPVMTFAEAERRYGSDKPDLRNPMELVDVADLLKSVEFAVFAGPANDPKGRVAALRVPGGAQLSRKQIDDYGNFVKIYGAKGLAYIKVNERAKGLDGINSPVAKFLTADIVDAILERTGAQDGDMIFFGADNKKVVADALGALRLKLGKDLSLTDEDKWAPLWVIDFPMFEDDGEGGLTAMHHPFTAPRDMTASELKTAPEEAVANAYDMVINGYEVGGGSVRIHNGEMQQTVFGILGINEQEQREKFGFLLDALKYGTPPHAGLAFGLDRLTMLLTGTDNIRDVIAFPKTTAAACLMTEAPSFANQAALTELGIQVVKKAENN</sequence>
<organism>
    <name type="scientific">Salmonella gallinarum (strain 287/91 / NCTC 13346)</name>
    <dbReference type="NCBI Taxonomy" id="550538"/>
    <lineage>
        <taxon>Bacteria</taxon>
        <taxon>Pseudomonadati</taxon>
        <taxon>Pseudomonadota</taxon>
        <taxon>Gammaproteobacteria</taxon>
        <taxon>Enterobacterales</taxon>
        <taxon>Enterobacteriaceae</taxon>
        <taxon>Salmonella</taxon>
    </lineage>
</organism>
<name>SYD_SALG2</name>
<proteinExistence type="inferred from homology"/>
<keyword id="KW-0030">Aminoacyl-tRNA synthetase</keyword>
<keyword id="KW-0067">ATP-binding</keyword>
<keyword id="KW-0963">Cytoplasm</keyword>
<keyword id="KW-0436">Ligase</keyword>
<keyword id="KW-0547">Nucleotide-binding</keyword>
<keyword id="KW-0648">Protein biosynthesis</keyword>
<accession>B5R8D6</accession>
<reference key="1">
    <citation type="journal article" date="2008" name="Genome Res.">
        <title>Comparative genome analysis of Salmonella enteritidis PT4 and Salmonella gallinarum 287/91 provides insights into evolutionary and host adaptation pathways.</title>
        <authorList>
            <person name="Thomson N.R."/>
            <person name="Clayton D.J."/>
            <person name="Windhorst D."/>
            <person name="Vernikos G."/>
            <person name="Davidson S."/>
            <person name="Churcher C."/>
            <person name="Quail M.A."/>
            <person name="Stevens M."/>
            <person name="Jones M.A."/>
            <person name="Watson M."/>
            <person name="Barron A."/>
            <person name="Layton A."/>
            <person name="Pickard D."/>
            <person name="Kingsley R.A."/>
            <person name="Bignell A."/>
            <person name="Clark L."/>
            <person name="Harris B."/>
            <person name="Ormond D."/>
            <person name="Abdellah Z."/>
            <person name="Brooks K."/>
            <person name="Cherevach I."/>
            <person name="Chillingworth T."/>
            <person name="Woodward J."/>
            <person name="Norberczak H."/>
            <person name="Lord A."/>
            <person name="Arrowsmith C."/>
            <person name="Jagels K."/>
            <person name="Moule S."/>
            <person name="Mungall K."/>
            <person name="Saunders M."/>
            <person name="Whitehead S."/>
            <person name="Chabalgoity J.A."/>
            <person name="Maskell D."/>
            <person name="Humphreys T."/>
            <person name="Roberts M."/>
            <person name="Barrow P.A."/>
            <person name="Dougan G."/>
            <person name="Parkhill J."/>
        </authorList>
    </citation>
    <scope>NUCLEOTIDE SEQUENCE [LARGE SCALE GENOMIC DNA]</scope>
    <source>
        <strain>287/91 / NCTC 13346</strain>
    </source>
</reference>
<protein>
    <recommendedName>
        <fullName evidence="1">Aspartate--tRNA ligase</fullName>
        <ecNumber evidence="1">6.1.1.12</ecNumber>
    </recommendedName>
    <alternativeName>
        <fullName evidence="1">Aspartyl-tRNA synthetase</fullName>
        <shortName evidence="1">AspRS</shortName>
    </alternativeName>
</protein>